<reference key="1">
    <citation type="journal article" date="1994" name="J. Mol. Neurosci.">
        <title>Isolation and coding sequence of the rat rod opsin gene.</title>
        <authorList>
            <person name="Barnstable C.J."/>
            <person name="Morabito M.A."/>
        </authorList>
    </citation>
    <scope>NUCLEOTIDE SEQUENCE [GENOMIC DNA]</scope>
    <source>
        <strain>Sprague-Dawley</strain>
        <tissue>Retinal rod cell</tissue>
    </source>
</reference>
<reference key="2">
    <citation type="submission" date="1994-12" db="EMBL/GenBank/DDBJ databases">
        <authorList>
            <person name="Huber A."/>
            <person name="Baker B.B."/>
            <person name="Sander P."/>
            <person name="Gerdon G."/>
            <person name="Paulsen R."/>
            <person name="Williams T.P."/>
        </authorList>
    </citation>
    <scope>NUCLEOTIDE SEQUENCE [MRNA]</scope>
    <source>
        <strain>Sprague-Dawley</strain>
        <tissue>Retina</tissue>
    </source>
</reference>
<name>OPSD_RAT</name>
<sequence>MNGTEGPNFYVPFSNITGVVRSPFEQPQYYLAEPWQFSMLAAYMFLLIVLGFPINFLTLYVTVQHKKLRTPLNYILLNLAVADLFMVFGGFTTTLYTSLHGYFVFGPTGCNLEGFFATLGGEIGLWSLVVLAIERYVVVCKPMSNFRFGENHAIMGVAFTWVMALACAAPPLVGWSRYIPEGMQCSCGIDYYTLKPEVNNESFVIYMFVVHFTIPMIVIFFCYGQLVFTVKEAAAQQQESATTQKAEKEVTRMVIIMVIFFLICWLPYASVAMYIFTHQGSNFGPIFMTLPAFFAKTASIYNPIIYIMMNKQFRNCMLTSLCCGKNPLGDDEASATASKTETSQVAPA</sequence>
<feature type="chain" id="PRO_0000197708" description="Rhodopsin">
    <location>
        <begin position="1"/>
        <end position="348"/>
    </location>
</feature>
<feature type="topological domain" description="Extracellular" evidence="7">
    <location>
        <begin position="1"/>
        <end position="36"/>
    </location>
</feature>
<feature type="transmembrane region" description="Helical; Name=1" evidence="1">
    <location>
        <begin position="37"/>
        <end position="61"/>
    </location>
</feature>
<feature type="topological domain" description="Cytoplasmic" evidence="7">
    <location>
        <begin position="62"/>
        <end position="73"/>
    </location>
</feature>
<feature type="transmembrane region" description="Helical; Name=2" evidence="1">
    <location>
        <begin position="74"/>
        <end position="96"/>
    </location>
</feature>
<feature type="topological domain" description="Extracellular" evidence="7">
    <location>
        <begin position="97"/>
        <end position="110"/>
    </location>
</feature>
<feature type="transmembrane region" description="Helical; Name=3" evidence="1">
    <location>
        <begin position="111"/>
        <end position="133"/>
    </location>
</feature>
<feature type="topological domain" description="Cytoplasmic" evidence="7">
    <location>
        <begin position="134"/>
        <end position="152"/>
    </location>
</feature>
<feature type="transmembrane region" description="Helical; Name=4" evidence="1">
    <location>
        <begin position="153"/>
        <end position="173"/>
    </location>
</feature>
<feature type="topological domain" description="Extracellular" evidence="7">
    <location>
        <begin position="174"/>
        <end position="202"/>
    </location>
</feature>
<feature type="transmembrane region" description="Helical; Name=5" evidence="1">
    <location>
        <begin position="203"/>
        <end position="224"/>
    </location>
</feature>
<feature type="topological domain" description="Cytoplasmic" evidence="7">
    <location>
        <begin position="225"/>
        <end position="252"/>
    </location>
</feature>
<feature type="transmembrane region" description="Helical; Name=6" evidence="1">
    <location>
        <begin position="253"/>
        <end position="274"/>
    </location>
</feature>
<feature type="topological domain" description="Extracellular" evidence="7">
    <location>
        <begin position="275"/>
        <end position="286"/>
    </location>
</feature>
<feature type="transmembrane region" description="Helical; Name=7" evidence="1">
    <location>
        <begin position="287"/>
        <end position="308"/>
    </location>
</feature>
<feature type="topological domain" description="Cytoplasmic" evidence="7">
    <location>
        <begin position="309"/>
        <end position="348"/>
    </location>
</feature>
<feature type="region of interest" description="Interaction with SAG" evidence="1">
    <location>
        <begin position="330"/>
        <end position="348"/>
    </location>
</feature>
<feature type="short sequence motif" description="'Ionic lock' involved in activated form stabilization" evidence="1">
    <location>
        <begin position="134"/>
        <end position="136"/>
    </location>
</feature>
<feature type="binding site" evidence="1">
    <location>
        <position position="201"/>
    </location>
    <ligand>
        <name>Zn(2+)</name>
        <dbReference type="ChEBI" id="CHEBI:29105"/>
    </ligand>
</feature>
<feature type="binding site" evidence="1">
    <location>
        <position position="279"/>
    </location>
    <ligand>
        <name>Zn(2+)</name>
        <dbReference type="ChEBI" id="CHEBI:29105"/>
    </ligand>
</feature>
<feature type="site" description="Plays an important role in the conformation switch to the active conformation" evidence="1">
    <location>
        <position position="113"/>
    </location>
</feature>
<feature type="modified residue" description="N-acetylmethionine" evidence="1">
    <location>
        <position position="1"/>
    </location>
</feature>
<feature type="modified residue" description="N6-(retinylidene)lysine" evidence="1">
    <location>
        <position position="296"/>
    </location>
</feature>
<feature type="modified residue" description="Phosphoserine" evidence="2">
    <location>
        <position position="334"/>
    </location>
</feature>
<feature type="modified residue" description="Phosphothreonine" evidence="2">
    <location>
        <position position="336"/>
    </location>
</feature>
<feature type="modified residue" description="Phosphoserine" evidence="2">
    <location>
        <position position="338"/>
    </location>
</feature>
<feature type="modified residue" description="Phosphothreonine" evidence="1">
    <location>
        <position position="340"/>
    </location>
</feature>
<feature type="modified residue" description="Phosphothreonine" evidence="1">
    <location>
        <position position="342"/>
    </location>
</feature>
<feature type="modified residue" description="Phosphoserine" evidence="1">
    <location>
        <position position="343"/>
    </location>
</feature>
<feature type="lipid moiety-binding region" description="S-palmitoyl cysteine" evidence="1">
    <location>
        <position position="322"/>
    </location>
</feature>
<feature type="lipid moiety-binding region" description="S-palmitoyl cysteine" evidence="1">
    <location>
        <position position="323"/>
    </location>
</feature>
<feature type="glycosylation site" description="N-linked (GlcNAc...) asparagine" evidence="5">
    <location>
        <position position="2"/>
    </location>
</feature>
<feature type="glycosylation site" description="N-linked (GlcNAc...) asparagine" evidence="5">
    <location>
        <position position="15"/>
    </location>
</feature>
<feature type="disulfide bond" evidence="6">
    <location>
        <begin position="110"/>
        <end position="187"/>
    </location>
</feature>
<feature type="sequence conflict" description="In Ref. 2; CAA87081." evidence="7" ref="2">
    <original>S</original>
    <variation>T</variation>
    <location>
        <position position="320"/>
    </location>
</feature>
<gene>
    <name type="primary">Rho</name>
</gene>
<proteinExistence type="evidence at transcript level"/>
<protein>
    <recommendedName>
        <fullName>Rhodopsin</fullName>
    </recommendedName>
</protein>
<evidence type="ECO:0000250" key="1">
    <source>
        <dbReference type="UniProtKB" id="P02699"/>
    </source>
</evidence>
<evidence type="ECO:0000250" key="2">
    <source>
        <dbReference type="UniProtKB" id="P02700"/>
    </source>
</evidence>
<evidence type="ECO:0000250" key="3">
    <source>
        <dbReference type="UniProtKB" id="P08100"/>
    </source>
</evidence>
<evidence type="ECO:0000250" key="4">
    <source>
        <dbReference type="UniProtKB" id="P15409"/>
    </source>
</evidence>
<evidence type="ECO:0000255" key="5"/>
<evidence type="ECO:0000255" key="6">
    <source>
        <dbReference type="PROSITE-ProRule" id="PRU00521"/>
    </source>
</evidence>
<evidence type="ECO:0000305" key="7"/>
<accession>P51489</accession>
<organism>
    <name type="scientific">Rattus norvegicus</name>
    <name type="common">Rat</name>
    <dbReference type="NCBI Taxonomy" id="10116"/>
    <lineage>
        <taxon>Eukaryota</taxon>
        <taxon>Metazoa</taxon>
        <taxon>Chordata</taxon>
        <taxon>Craniata</taxon>
        <taxon>Vertebrata</taxon>
        <taxon>Euteleostomi</taxon>
        <taxon>Mammalia</taxon>
        <taxon>Eutheria</taxon>
        <taxon>Euarchontoglires</taxon>
        <taxon>Glires</taxon>
        <taxon>Rodentia</taxon>
        <taxon>Myomorpha</taxon>
        <taxon>Muroidea</taxon>
        <taxon>Muridae</taxon>
        <taxon>Murinae</taxon>
        <taxon>Rattus</taxon>
    </lineage>
</organism>
<dbReference type="EMBL" id="U22180">
    <property type="protein sequence ID" value="AAA84439.1"/>
    <property type="molecule type" value="Genomic_DNA"/>
</dbReference>
<dbReference type="EMBL" id="Z46957">
    <property type="protein sequence ID" value="CAA87081.1"/>
    <property type="molecule type" value="mRNA"/>
</dbReference>
<dbReference type="PIR" id="S51677">
    <property type="entry name" value="S51677"/>
</dbReference>
<dbReference type="RefSeq" id="NP_254276.1">
    <property type="nucleotide sequence ID" value="NM_033441.1"/>
</dbReference>
<dbReference type="SMR" id="P51489"/>
<dbReference type="FunCoup" id="P51489">
    <property type="interactions" value="28"/>
</dbReference>
<dbReference type="STRING" id="10116.ENSRNOP00000061473"/>
<dbReference type="GlyCosmos" id="P51489">
    <property type="glycosylation" value="2 sites, No reported glycans"/>
</dbReference>
<dbReference type="GlyGen" id="P51489">
    <property type="glycosylation" value="2 sites"/>
</dbReference>
<dbReference type="iPTMnet" id="P51489"/>
<dbReference type="PhosphoSitePlus" id="P51489"/>
<dbReference type="PaxDb" id="10116-ENSRNOP00000061473"/>
<dbReference type="GeneID" id="24717"/>
<dbReference type="KEGG" id="rno:24717"/>
<dbReference type="UCSC" id="RGD:3573">
    <property type="organism name" value="rat"/>
</dbReference>
<dbReference type="AGR" id="RGD:3573"/>
<dbReference type="CTD" id="6010"/>
<dbReference type="RGD" id="3573">
    <property type="gene designation" value="Rho"/>
</dbReference>
<dbReference type="eggNOG" id="KOG3656">
    <property type="taxonomic scope" value="Eukaryota"/>
</dbReference>
<dbReference type="InParanoid" id="P51489"/>
<dbReference type="OrthoDB" id="5962323at2759"/>
<dbReference type="PhylomeDB" id="P51489"/>
<dbReference type="TreeFam" id="TF324998"/>
<dbReference type="Reactome" id="R-RNO-2453902">
    <property type="pathway name" value="The canonical retinoid cycle in rods (twilight vision)"/>
</dbReference>
<dbReference type="Reactome" id="R-RNO-2485179">
    <property type="pathway name" value="Activation of the phototransduction cascade"/>
</dbReference>
<dbReference type="Reactome" id="R-RNO-2514859">
    <property type="pathway name" value="Inactivation, recovery and regulation of the phototransduction cascade"/>
</dbReference>
<dbReference type="Reactome" id="R-RNO-418594">
    <property type="pathway name" value="G alpha (i) signalling events"/>
</dbReference>
<dbReference type="Reactome" id="R-RNO-419771">
    <property type="pathway name" value="Opsins"/>
</dbReference>
<dbReference type="Reactome" id="R-RNO-5620916">
    <property type="pathway name" value="VxPx cargo-targeting to cilium"/>
</dbReference>
<dbReference type="PRO" id="PR:P51489"/>
<dbReference type="Proteomes" id="UP000002494">
    <property type="component" value="Unplaced"/>
</dbReference>
<dbReference type="GO" id="GO:0005911">
    <property type="term" value="C:cell-cell junction"/>
    <property type="evidence" value="ECO:0000266"/>
    <property type="project" value="RGD"/>
</dbReference>
<dbReference type="GO" id="GO:0005794">
    <property type="term" value="C:Golgi apparatus"/>
    <property type="evidence" value="ECO:0000266"/>
    <property type="project" value="RGD"/>
</dbReference>
<dbReference type="GO" id="GO:0016020">
    <property type="term" value="C:membrane"/>
    <property type="evidence" value="ECO:0000250"/>
    <property type="project" value="UniProtKB"/>
</dbReference>
<dbReference type="GO" id="GO:0097381">
    <property type="term" value="C:photoreceptor disc membrane"/>
    <property type="evidence" value="ECO:0000250"/>
    <property type="project" value="UniProtKB"/>
</dbReference>
<dbReference type="GO" id="GO:0001917">
    <property type="term" value="C:photoreceptor inner segment"/>
    <property type="evidence" value="ECO:0000266"/>
    <property type="project" value="RGD"/>
</dbReference>
<dbReference type="GO" id="GO:0060342">
    <property type="term" value="C:photoreceptor inner segment membrane"/>
    <property type="evidence" value="ECO:0000250"/>
    <property type="project" value="UniProtKB"/>
</dbReference>
<dbReference type="GO" id="GO:0001750">
    <property type="term" value="C:photoreceptor outer segment"/>
    <property type="evidence" value="ECO:0000314"/>
    <property type="project" value="RGD"/>
</dbReference>
<dbReference type="GO" id="GO:0042622">
    <property type="term" value="C:photoreceptor outer segment membrane"/>
    <property type="evidence" value="ECO:0000314"/>
    <property type="project" value="RGD"/>
</dbReference>
<dbReference type="GO" id="GO:0005886">
    <property type="term" value="C:plasma membrane"/>
    <property type="evidence" value="ECO:0000250"/>
    <property type="project" value="UniProtKB"/>
</dbReference>
<dbReference type="GO" id="GO:0120200">
    <property type="term" value="C:rod photoreceptor outer segment"/>
    <property type="evidence" value="ECO:0000266"/>
    <property type="project" value="RGD"/>
</dbReference>
<dbReference type="GO" id="GO:0030867">
    <property type="term" value="C:rough endoplasmic reticulum membrane"/>
    <property type="evidence" value="ECO:0000314"/>
    <property type="project" value="RGD"/>
</dbReference>
<dbReference type="GO" id="GO:1990913">
    <property type="term" value="C:sperm head plasma membrane"/>
    <property type="evidence" value="ECO:0000266"/>
    <property type="project" value="RGD"/>
</dbReference>
<dbReference type="GO" id="GO:0097225">
    <property type="term" value="C:sperm midpiece"/>
    <property type="evidence" value="ECO:0000266"/>
    <property type="project" value="RGD"/>
</dbReference>
<dbReference type="GO" id="GO:0005502">
    <property type="term" value="F:11-cis retinal binding"/>
    <property type="evidence" value="ECO:0000250"/>
    <property type="project" value="UniProtKB"/>
</dbReference>
<dbReference type="GO" id="GO:0008020">
    <property type="term" value="F:G protein-coupled photoreceptor activity"/>
    <property type="evidence" value="ECO:0000250"/>
    <property type="project" value="UniProtKB"/>
</dbReference>
<dbReference type="GO" id="GO:0046872">
    <property type="term" value="F:metal ion binding"/>
    <property type="evidence" value="ECO:0007669"/>
    <property type="project" value="UniProtKB-KW"/>
</dbReference>
<dbReference type="GO" id="GO:0016918">
    <property type="term" value="F:retinal binding"/>
    <property type="evidence" value="ECO:0000314"/>
    <property type="project" value="RGD"/>
</dbReference>
<dbReference type="GO" id="GO:0030507">
    <property type="term" value="F:spectrin binding"/>
    <property type="evidence" value="ECO:0000314"/>
    <property type="project" value="MGI"/>
</dbReference>
<dbReference type="GO" id="GO:0016038">
    <property type="term" value="P:absorption of visible light"/>
    <property type="evidence" value="ECO:0000250"/>
    <property type="project" value="AgBase"/>
</dbReference>
<dbReference type="GO" id="GO:0071482">
    <property type="term" value="P:cellular response to light stimulus"/>
    <property type="evidence" value="ECO:0000266"/>
    <property type="project" value="RGD"/>
</dbReference>
<dbReference type="GO" id="GO:0009583">
    <property type="term" value="P:detection of light stimulus"/>
    <property type="evidence" value="ECO:0000266"/>
    <property type="project" value="RGD"/>
</dbReference>
<dbReference type="GO" id="GO:0050960">
    <property type="term" value="P:detection of temperature stimulus involved in thermoception"/>
    <property type="evidence" value="ECO:0000266"/>
    <property type="project" value="RGD"/>
</dbReference>
<dbReference type="GO" id="GO:0016056">
    <property type="term" value="P:G protein-coupled opsin signaling pathway"/>
    <property type="evidence" value="ECO:0000314"/>
    <property type="project" value="RGD"/>
</dbReference>
<dbReference type="GO" id="GO:0007186">
    <property type="term" value="P:G protein-coupled receptor signaling pathway"/>
    <property type="evidence" value="ECO:0000266"/>
    <property type="project" value="RGD"/>
</dbReference>
<dbReference type="GO" id="GO:0010467">
    <property type="term" value="P:gene expression"/>
    <property type="evidence" value="ECO:0000266"/>
    <property type="project" value="RGD"/>
</dbReference>
<dbReference type="GO" id="GO:0000226">
    <property type="term" value="P:microtubule cytoskeleton organization"/>
    <property type="evidence" value="ECO:0000266"/>
    <property type="project" value="RGD"/>
</dbReference>
<dbReference type="GO" id="GO:0045494">
    <property type="term" value="P:photoreceptor cell maintenance"/>
    <property type="evidence" value="ECO:0000266"/>
    <property type="project" value="RGD"/>
</dbReference>
<dbReference type="GO" id="GO:0007602">
    <property type="term" value="P:phototransduction"/>
    <property type="evidence" value="ECO:0000266"/>
    <property type="project" value="RGD"/>
</dbReference>
<dbReference type="GO" id="GO:0071800">
    <property type="term" value="P:podosome assembly"/>
    <property type="evidence" value="ECO:0000266"/>
    <property type="project" value="RGD"/>
</dbReference>
<dbReference type="GO" id="GO:0009585">
    <property type="term" value="P:red, far-red light phototransduction"/>
    <property type="evidence" value="ECO:0000314"/>
    <property type="project" value="RGD"/>
</dbReference>
<dbReference type="GO" id="GO:0009642">
    <property type="term" value="P:response to light intensity"/>
    <property type="evidence" value="ECO:0000266"/>
    <property type="project" value="RGD"/>
</dbReference>
<dbReference type="GO" id="GO:0009416">
    <property type="term" value="P:response to light stimulus"/>
    <property type="evidence" value="ECO:0000266"/>
    <property type="project" value="RGD"/>
</dbReference>
<dbReference type="GO" id="GO:0060041">
    <property type="term" value="P:retina development in camera-type eye"/>
    <property type="evidence" value="ECO:0000266"/>
    <property type="project" value="RGD"/>
</dbReference>
<dbReference type="GO" id="GO:1904389">
    <property type="term" value="P:rod bipolar cell differentiation"/>
    <property type="evidence" value="ECO:0000266"/>
    <property type="project" value="RGD"/>
</dbReference>
<dbReference type="GO" id="GO:0050953">
    <property type="term" value="P:sensory perception of light stimulus"/>
    <property type="evidence" value="ECO:0000266"/>
    <property type="project" value="RGD"/>
</dbReference>
<dbReference type="GO" id="GO:0043052">
    <property type="term" value="P:thermotaxis"/>
    <property type="evidence" value="ECO:0000266"/>
    <property type="project" value="RGD"/>
</dbReference>
<dbReference type="GO" id="GO:0007601">
    <property type="term" value="P:visual perception"/>
    <property type="evidence" value="ECO:0000266"/>
    <property type="project" value="RGD"/>
</dbReference>
<dbReference type="CDD" id="cd15080">
    <property type="entry name" value="7tmA_MWS_opsin"/>
    <property type="match status" value="1"/>
</dbReference>
<dbReference type="FunFam" id="1.20.1070.10:FF:000018">
    <property type="entry name" value="Rhodopsin"/>
    <property type="match status" value="1"/>
</dbReference>
<dbReference type="Gene3D" id="1.20.1070.10">
    <property type="entry name" value="Rhodopsin 7-helix transmembrane proteins"/>
    <property type="match status" value="1"/>
</dbReference>
<dbReference type="InterPro" id="IPR050125">
    <property type="entry name" value="GPCR_opsins"/>
</dbReference>
<dbReference type="InterPro" id="IPR000276">
    <property type="entry name" value="GPCR_Rhodpsn"/>
</dbReference>
<dbReference type="InterPro" id="IPR017452">
    <property type="entry name" value="GPCR_Rhodpsn_7TM"/>
</dbReference>
<dbReference type="InterPro" id="IPR001760">
    <property type="entry name" value="Opsin"/>
</dbReference>
<dbReference type="InterPro" id="IPR027430">
    <property type="entry name" value="Retinal_BS"/>
</dbReference>
<dbReference type="InterPro" id="IPR000732">
    <property type="entry name" value="Rhodopsin"/>
</dbReference>
<dbReference type="InterPro" id="IPR019477">
    <property type="entry name" value="Rhodopsin_N"/>
</dbReference>
<dbReference type="PANTHER" id="PTHR24240">
    <property type="entry name" value="OPSIN"/>
    <property type="match status" value="1"/>
</dbReference>
<dbReference type="Pfam" id="PF00001">
    <property type="entry name" value="7tm_1"/>
    <property type="match status" value="1"/>
</dbReference>
<dbReference type="Pfam" id="PF10413">
    <property type="entry name" value="Rhodopsin_N"/>
    <property type="match status" value="1"/>
</dbReference>
<dbReference type="PRINTS" id="PR00237">
    <property type="entry name" value="GPCRRHODOPSN"/>
</dbReference>
<dbReference type="PRINTS" id="PR00238">
    <property type="entry name" value="OPSIN"/>
</dbReference>
<dbReference type="PRINTS" id="PR00579">
    <property type="entry name" value="RHODOPSIN"/>
</dbReference>
<dbReference type="SUPFAM" id="SSF81321">
    <property type="entry name" value="Family A G protein-coupled receptor-like"/>
    <property type="match status" value="1"/>
</dbReference>
<dbReference type="PROSITE" id="PS00237">
    <property type="entry name" value="G_PROTEIN_RECEP_F1_1"/>
    <property type="match status" value="1"/>
</dbReference>
<dbReference type="PROSITE" id="PS50262">
    <property type="entry name" value="G_PROTEIN_RECEP_F1_2"/>
    <property type="match status" value="1"/>
</dbReference>
<dbReference type="PROSITE" id="PS00238">
    <property type="entry name" value="OPSIN"/>
    <property type="match status" value="1"/>
</dbReference>
<comment type="function">
    <text evidence="1 3">Photoreceptor required for image-forming vision at low light intensity. Required for photoreceptor cell viability after birth (By similarity). Light-induced isomerization of 11-cis to all-trans retinal triggers a conformational change that activates signaling via G-proteins. Subsequent receptor phosphorylation mediates displacement of the bound G-protein alpha subunit by the arrestin SAG and terminates signaling (By similarity).</text>
</comment>
<comment type="subunit">
    <text evidence="1 3 4">Homodimer. May form a complex composed of RHO, GRK1 and RCVRN in a Ca(2+)-dependent manner; RCVRN prevents the interaction between GRK1 and RHO (By similarity). Interacts with GRK1 (By similarity). Interacts (phosphorylated form) with SAG (By similarity). Interacts with GNAT1 (By similarity). Interacts with GNAT3. SAG and G-proteins compete for a common binding site (By similarity). Interacts with PRCD; the interaction promotes PRCD stability (By similarity). Forms a complex with ASAP1 and ARF4. Forms a complex with ASAP1, RAB11A, Rabin8/RAB3IP, ARF4 and RAB11FIP3; the complex regulates Golgi-to-cilia rhodopsin/RHO transport in photoreceptors (By similarity).</text>
</comment>
<comment type="subcellular location">
    <subcellularLocation>
        <location evidence="1">Membrane</location>
        <topology evidence="1">Multi-pass membrane protein</topology>
    </subcellularLocation>
    <subcellularLocation>
        <location evidence="1">Cell projection</location>
        <location evidence="1">Cilium</location>
        <location evidence="1">Photoreceptor outer segment</location>
    </subcellularLocation>
    <text evidence="3">Synthesized in the inner segment (IS) of rod photoreceptor cells before vectorial transport to disk membranes in the rod outer segment (OS) photosensory cilia.</text>
</comment>
<comment type="PTM">
    <text evidence="1">Phosphorylated on some or all of the serine and threonine residues present in the C-terminal region.</text>
</comment>
<comment type="PTM">
    <text evidence="1">Contains one covalently linked retinal chromophore. Upon light absorption, the covalently bound 11-cis-retinal is converted to all-trans-retinal. After hydrolysis of the Schiff base and release of the covalently bound all-trans-retinal, active rhodopsin is regenerated by binding of a fresh molecule of 11-cis-retinal.</text>
</comment>
<comment type="similarity">
    <text evidence="6">Belongs to the G-protein coupled receptor 1 family. Opsin subfamily.</text>
</comment>
<keyword id="KW-0007">Acetylation</keyword>
<keyword id="KW-0966">Cell projection</keyword>
<keyword id="KW-0157">Chromophore</keyword>
<keyword id="KW-1015">Disulfide bond</keyword>
<keyword id="KW-0297">G-protein coupled receptor</keyword>
<keyword id="KW-0325">Glycoprotein</keyword>
<keyword id="KW-0449">Lipoprotein</keyword>
<keyword id="KW-0472">Membrane</keyword>
<keyword id="KW-0479">Metal-binding</keyword>
<keyword id="KW-0564">Palmitate</keyword>
<keyword id="KW-0597">Phosphoprotein</keyword>
<keyword id="KW-0600">Photoreceptor protein</keyword>
<keyword id="KW-0675">Receptor</keyword>
<keyword id="KW-1185">Reference proteome</keyword>
<keyword id="KW-0681">Retinal protein</keyword>
<keyword id="KW-0716">Sensory transduction</keyword>
<keyword id="KW-0807">Transducer</keyword>
<keyword id="KW-0812">Transmembrane</keyword>
<keyword id="KW-1133">Transmembrane helix</keyword>
<keyword id="KW-0844">Vision</keyword>
<keyword id="KW-0862">Zinc</keyword>